<comment type="function">
    <text evidence="1">Component of the eukaryotic translation initiation factor 3 (eIF-3) complex, which is involved in protein synthesis of a specialized repertoire of mRNAs and, together with other initiation factors, stimulates binding of mRNA and methionyl-tRNAi to the 40S ribosome. The eIF-3 complex specifically targets and initiates translation of a subset of mRNAs involved in cell proliferation.</text>
</comment>
<comment type="subunit">
    <text evidence="1">Component of the eukaryotic translation initiation factor 3 (eIF-3) complex.</text>
</comment>
<comment type="subcellular location">
    <subcellularLocation>
        <location evidence="1">Cytoplasm</location>
    </subcellularLocation>
</comment>
<comment type="similarity">
    <text evidence="1">Belongs to the eIF-3 subunit I family.</text>
</comment>
<dbReference type="EMBL" id="HE600906">
    <property type="protein sequence ID" value="CAP24790.1"/>
    <property type="molecule type" value="Genomic_DNA"/>
</dbReference>
<dbReference type="SMR" id="A8WVX8"/>
<dbReference type="FunCoup" id="A8WVX8">
    <property type="interactions" value="2514"/>
</dbReference>
<dbReference type="STRING" id="6238.A8WVX8"/>
<dbReference type="EnsemblMetazoa" id="CBG03991.1">
    <property type="protein sequence ID" value="CBG03991.1"/>
    <property type="gene ID" value="WBGene00026744"/>
</dbReference>
<dbReference type="KEGG" id="cbr:CBG_03991"/>
<dbReference type="CTD" id="8581396"/>
<dbReference type="WormBase" id="CBG03991">
    <property type="protein sequence ID" value="CBP06619"/>
    <property type="gene ID" value="WBGene00026744"/>
    <property type="gene designation" value="Cbr-eif-3.I"/>
</dbReference>
<dbReference type="eggNOG" id="KOG0643">
    <property type="taxonomic scope" value="Eukaryota"/>
</dbReference>
<dbReference type="HOGENOM" id="CLU_043845_0_1_1"/>
<dbReference type="InParanoid" id="A8WVX8"/>
<dbReference type="OMA" id="VWFSHNG"/>
<dbReference type="Proteomes" id="UP000008549">
    <property type="component" value="Unassembled WGS sequence"/>
</dbReference>
<dbReference type="GO" id="GO:0016282">
    <property type="term" value="C:eukaryotic 43S preinitiation complex"/>
    <property type="evidence" value="ECO:0007669"/>
    <property type="project" value="UniProtKB-UniRule"/>
</dbReference>
<dbReference type="GO" id="GO:0033290">
    <property type="term" value="C:eukaryotic 48S preinitiation complex"/>
    <property type="evidence" value="ECO:0007669"/>
    <property type="project" value="UniProtKB-UniRule"/>
</dbReference>
<dbReference type="GO" id="GO:0071541">
    <property type="term" value="C:eukaryotic translation initiation factor 3 complex, eIF3m"/>
    <property type="evidence" value="ECO:0000318"/>
    <property type="project" value="GO_Central"/>
</dbReference>
<dbReference type="GO" id="GO:0003723">
    <property type="term" value="F:RNA binding"/>
    <property type="evidence" value="ECO:0000318"/>
    <property type="project" value="GO_Central"/>
</dbReference>
<dbReference type="GO" id="GO:0003743">
    <property type="term" value="F:translation initiation factor activity"/>
    <property type="evidence" value="ECO:0000318"/>
    <property type="project" value="GO_Central"/>
</dbReference>
<dbReference type="GO" id="GO:0002183">
    <property type="term" value="P:cytoplasmic translational initiation"/>
    <property type="evidence" value="ECO:0000318"/>
    <property type="project" value="GO_Central"/>
</dbReference>
<dbReference type="GO" id="GO:0001732">
    <property type="term" value="P:formation of cytoplasmic translation initiation complex"/>
    <property type="evidence" value="ECO:0007669"/>
    <property type="project" value="UniProtKB-UniRule"/>
</dbReference>
<dbReference type="Gene3D" id="2.130.10.10">
    <property type="entry name" value="YVTN repeat-like/Quinoprotein amine dehydrogenase"/>
    <property type="match status" value="1"/>
</dbReference>
<dbReference type="HAMAP" id="MF_03008">
    <property type="entry name" value="eIF3i"/>
    <property type="match status" value="1"/>
</dbReference>
<dbReference type="InterPro" id="IPR027525">
    <property type="entry name" value="eIF3i"/>
</dbReference>
<dbReference type="InterPro" id="IPR015943">
    <property type="entry name" value="WD40/YVTN_repeat-like_dom_sf"/>
</dbReference>
<dbReference type="InterPro" id="IPR036322">
    <property type="entry name" value="WD40_repeat_dom_sf"/>
</dbReference>
<dbReference type="InterPro" id="IPR001680">
    <property type="entry name" value="WD40_rpt"/>
</dbReference>
<dbReference type="PANTHER" id="PTHR19877">
    <property type="entry name" value="EUKARYOTIC TRANSLATION INITIATION FACTOR 3 SUBUNIT I"/>
    <property type="match status" value="1"/>
</dbReference>
<dbReference type="PANTHER" id="PTHR19877:SF1">
    <property type="entry name" value="EUKARYOTIC TRANSLATION INITIATION FACTOR 3 SUBUNIT I"/>
    <property type="match status" value="1"/>
</dbReference>
<dbReference type="Pfam" id="PF24805">
    <property type="entry name" value="EIF3I"/>
    <property type="match status" value="1"/>
</dbReference>
<dbReference type="SMART" id="SM00320">
    <property type="entry name" value="WD40"/>
    <property type="match status" value="5"/>
</dbReference>
<dbReference type="SUPFAM" id="SSF50978">
    <property type="entry name" value="WD40 repeat-like"/>
    <property type="match status" value="1"/>
</dbReference>
<dbReference type="PROSITE" id="PS00678">
    <property type="entry name" value="WD_REPEATS_1"/>
    <property type="match status" value="1"/>
</dbReference>
<dbReference type="PROSITE" id="PS50082">
    <property type="entry name" value="WD_REPEATS_2"/>
    <property type="match status" value="3"/>
</dbReference>
<dbReference type="PROSITE" id="PS50294">
    <property type="entry name" value="WD_REPEATS_REGION"/>
    <property type="match status" value="2"/>
</dbReference>
<name>EIF3I_CAEBR</name>
<organism>
    <name type="scientific">Caenorhabditis briggsae</name>
    <dbReference type="NCBI Taxonomy" id="6238"/>
    <lineage>
        <taxon>Eukaryota</taxon>
        <taxon>Metazoa</taxon>
        <taxon>Ecdysozoa</taxon>
        <taxon>Nematoda</taxon>
        <taxon>Chromadorea</taxon>
        <taxon>Rhabditida</taxon>
        <taxon>Rhabditina</taxon>
        <taxon>Rhabditomorpha</taxon>
        <taxon>Rhabditoidea</taxon>
        <taxon>Rhabditidae</taxon>
        <taxon>Peloderinae</taxon>
        <taxon>Caenorhabditis</taxon>
    </lineage>
</organism>
<gene>
    <name evidence="1 2" type="primary">eif-3.I</name>
    <name evidence="2" type="ORF">CBG03991</name>
</gene>
<feature type="chain" id="PRO_0000365336" description="Eukaryotic translation initiation factor 3 subunit I">
    <location>
        <begin position="1"/>
        <end position="327"/>
    </location>
</feature>
<feature type="repeat" description="WD 1">
    <location>
        <begin position="8"/>
        <end position="49"/>
    </location>
</feature>
<feature type="repeat" description="WD 2">
    <location>
        <begin position="51"/>
        <end position="89"/>
    </location>
</feature>
<feature type="repeat" description="WD 3">
    <location>
        <begin position="188"/>
        <end position="227"/>
    </location>
</feature>
<feature type="repeat" description="WD 4">
    <location>
        <begin position="229"/>
        <end position="268"/>
    </location>
</feature>
<feature type="repeat" description="WD 5">
    <location>
        <begin position="285"/>
        <end position="324"/>
    </location>
</feature>
<reference key="1">
    <citation type="journal article" date="2003" name="PLoS Biol.">
        <title>The genome sequence of Caenorhabditis briggsae: a platform for comparative genomics.</title>
        <authorList>
            <person name="Stein L.D."/>
            <person name="Bao Z."/>
            <person name="Blasiar D."/>
            <person name="Blumenthal T."/>
            <person name="Brent M.R."/>
            <person name="Chen N."/>
            <person name="Chinwalla A."/>
            <person name="Clarke L."/>
            <person name="Clee C."/>
            <person name="Coghlan A."/>
            <person name="Coulson A."/>
            <person name="D'Eustachio P."/>
            <person name="Fitch D.H.A."/>
            <person name="Fulton L.A."/>
            <person name="Fulton R.E."/>
            <person name="Griffiths-Jones S."/>
            <person name="Harris T.W."/>
            <person name="Hillier L.W."/>
            <person name="Kamath R."/>
            <person name="Kuwabara P.E."/>
            <person name="Mardis E.R."/>
            <person name="Marra M.A."/>
            <person name="Miner T.L."/>
            <person name="Minx P."/>
            <person name="Mullikin J.C."/>
            <person name="Plumb R.W."/>
            <person name="Rogers J."/>
            <person name="Schein J.E."/>
            <person name="Sohrmann M."/>
            <person name="Spieth J."/>
            <person name="Stajich J.E."/>
            <person name="Wei C."/>
            <person name="Willey D."/>
            <person name="Wilson R.K."/>
            <person name="Durbin R.M."/>
            <person name="Waterston R.H."/>
        </authorList>
    </citation>
    <scope>NUCLEOTIDE SEQUENCE [LARGE SCALE GENOMIC DNA]</scope>
    <source>
        <strain>AF16</strain>
    </source>
</reference>
<accession>A8WVX8</accession>
<sequence length="327" mass="36650">MRPLSLKGHERALTRVRFNREGDLTFSCAKDKKPCVWYTENGERIGSYDGHNGAVWDIDVSWDTSKCVTASGDLTVKIWDAELGSCIYTINHQTPMKSCGFSYSGNLVCYTTQKMTKNLSTVQVRDLRDGNQMAEGAESFFSTQFDVNATTALFSQMDDIITIGFESGLLQQYDLRNPDSPINTNEVVHRYSIQDLQLSPRGDFLISASRDKTAALLDVNDLKKLKQYKSERPVNSACIAPNRDHICLGGGEDAMQVTQTAVSAGHFEAKIYHMVFEEEFARFKGHFGPINTMAWHPSGSIIATGGEDGYVRIQEFDEDYLGFTYDF</sequence>
<proteinExistence type="inferred from homology"/>
<keyword id="KW-0963">Cytoplasm</keyword>
<keyword id="KW-0396">Initiation factor</keyword>
<keyword id="KW-0648">Protein biosynthesis</keyword>
<keyword id="KW-1185">Reference proteome</keyword>
<keyword id="KW-0677">Repeat</keyword>
<keyword id="KW-0853">WD repeat</keyword>
<evidence type="ECO:0000255" key="1">
    <source>
        <dbReference type="HAMAP-Rule" id="MF_03008"/>
    </source>
</evidence>
<evidence type="ECO:0000312" key="2">
    <source>
        <dbReference type="WormBase" id="CBG03991"/>
    </source>
</evidence>
<protein>
    <recommendedName>
        <fullName evidence="1">Eukaryotic translation initiation factor 3 subunit I</fullName>
        <shortName evidence="1">eIF3i</shortName>
    </recommendedName>
</protein>